<feature type="chain" id="PRO_1000193564" description="Gamma-glutamyl phosphate reductase">
    <location>
        <begin position="1"/>
        <end position="427"/>
    </location>
</feature>
<accession>B8J8Z7</accession>
<proteinExistence type="inferred from homology"/>
<reference key="1">
    <citation type="submission" date="2009-01" db="EMBL/GenBank/DDBJ databases">
        <title>Complete sequence of Anaeromyxobacter dehalogenans 2CP-1.</title>
        <authorList>
            <person name="Lucas S."/>
            <person name="Copeland A."/>
            <person name="Lapidus A."/>
            <person name="Glavina del Rio T."/>
            <person name="Dalin E."/>
            <person name="Tice H."/>
            <person name="Bruce D."/>
            <person name="Goodwin L."/>
            <person name="Pitluck S."/>
            <person name="Saunders E."/>
            <person name="Brettin T."/>
            <person name="Detter J.C."/>
            <person name="Han C."/>
            <person name="Larimer F."/>
            <person name="Land M."/>
            <person name="Hauser L."/>
            <person name="Kyrpides N."/>
            <person name="Ovchinnikova G."/>
            <person name="Beliaev A.S."/>
            <person name="Richardson P."/>
        </authorList>
    </citation>
    <scope>NUCLEOTIDE SEQUENCE [LARGE SCALE GENOMIC DNA]</scope>
    <source>
        <strain>2CP-1 / ATCC BAA-258</strain>
    </source>
</reference>
<organism>
    <name type="scientific">Anaeromyxobacter dehalogenans (strain 2CP-1 / ATCC BAA-258)</name>
    <dbReference type="NCBI Taxonomy" id="455488"/>
    <lineage>
        <taxon>Bacteria</taxon>
        <taxon>Pseudomonadati</taxon>
        <taxon>Myxococcota</taxon>
        <taxon>Myxococcia</taxon>
        <taxon>Myxococcales</taxon>
        <taxon>Cystobacterineae</taxon>
        <taxon>Anaeromyxobacteraceae</taxon>
        <taxon>Anaeromyxobacter</taxon>
    </lineage>
</organism>
<comment type="function">
    <text evidence="1">Catalyzes the NADPH-dependent reduction of L-glutamate 5-phosphate into L-glutamate 5-semialdehyde and phosphate. The product spontaneously undergoes cyclization to form 1-pyrroline-5-carboxylate.</text>
</comment>
<comment type="catalytic activity">
    <reaction evidence="1">
        <text>L-glutamate 5-semialdehyde + phosphate + NADP(+) = L-glutamyl 5-phosphate + NADPH + H(+)</text>
        <dbReference type="Rhea" id="RHEA:19541"/>
        <dbReference type="ChEBI" id="CHEBI:15378"/>
        <dbReference type="ChEBI" id="CHEBI:43474"/>
        <dbReference type="ChEBI" id="CHEBI:57783"/>
        <dbReference type="ChEBI" id="CHEBI:58066"/>
        <dbReference type="ChEBI" id="CHEBI:58274"/>
        <dbReference type="ChEBI" id="CHEBI:58349"/>
        <dbReference type="EC" id="1.2.1.41"/>
    </reaction>
</comment>
<comment type="pathway">
    <text evidence="1">Amino-acid biosynthesis; L-proline biosynthesis; L-glutamate 5-semialdehyde from L-glutamate: step 2/2.</text>
</comment>
<comment type="subcellular location">
    <subcellularLocation>
        <location evidence="1">Cytoplasm</location>
    </subcellularLocation>
</comment>
<comment type="similarity">
    <text evidence="1">Belongs to the gamma-glutamyl phosphate reductase family.</text>
</comment>
<keyword id="KW-0028">Amino-acid biosynthesis</keyword>
<keyword id="KW-0963">Cytoplasm</keyword>
<keyword id="KW-0521">NADP</keyword>
<keyword id="KW-0560">Oxidoreductase</keyword>
<keyword id="KW-0641">Proline biosynthesis</keyword>
<sequence>MRKEKSLGLAAEMRKLAEASREAARALSHADPRRKDAALRAAAEAIGRREKRILSENARDVAAARAAGQNAAYLDRLRLDPKRLAGIGAALHEIAGLRDPVGEVTASWRRPNGLEIRKVRIPLGVVLMVYEARPNVTVDAAALCLKSGNAAILRPGSDALRSSLALAAAFAEGLEKAGLPAASAQVVPTPDREATYELLALDDLIDLAIPRGGPSLIRAVAARSRVPVLKHYQGVCHLYLDASAPPQQAVDLALNGKVQRPGVCNATECLLVHRGAAGKLLPPVGRALADAGVELRCDPTALTILKRAGVAAVPARPDDFGKEFLDKILAVRVVADLDGALDHIARYGSLHTEAIVTRDLASARRFQREVDASAVMVNASTRFNDGGELGLGAEIGISTTKLHAFGPMGLAELTTQKFLVEGEGHVR</sequence>
<dbReference type="EC" id="1.2.1.41" evidence="1"/>
<dbReference type="EMBL" id="CP001359">
    <property type="protein sequence ID" value="ACL63595.1"/>
    <property type="molecule type" value="Genomic_DNA"/>
</dbReference>
<dbReference type="RefSeq" id="WP_012631658.1">
    <property type="nucleotide sequence ID" value="NC_011891.1"/>
</dbReference>
<dbReference type="SMR" id="B8J8Z7"/>
<dbReference type="KEGG" id="acp:A2cp1_0236"/>
<dbReference type="HOGENOM" id="CLU_030231_0_0_7"/>
<dbReference type="UniPathway" id="UPA00098">
    <property type="reaction ID" value="UER00360"/>
</dbReference>
<dbReference type="Proteomes" id="UP000007089">
    <property type="component" value="Chromosome"/>
</dbReference>
<dbReference type="GO" id="GO:0005737">
    <property type="term" value="C:cytoplasm"/>
    <property type="evidence" value="ECO:0007669"/>
    <property type="project" value="UniProtKB-SubCell"/>
</dbReference>
<dbReference type="GO" id="GO:0004350">
    <property type="term" value="F:glutamate-5-semialdehyde dehydrogenase activity"/>
    <property type="evidence" value="ECO:0007669"/>
    <property type="project" value="UniProtKB-UniRule"/>
</dbReference>
<dbReference type="GO" id="GO:0050661">
    <property type="term" value="F:NADP binding"/>
    <property type="evidence" value="ECO:0007669"/>
    <property type="project" value="InterPro"/>
</dbReference>
<dbReference type="GO" id="GO:0055129">
    <property type="term" value="P:L-proline biosynthetic process"/>
    <property type="evidence" value="ECO:0007669"/>
    <property type="project" value="UniProtKB-UniRule"/>
</dbReference>
<dbReference type="CDD" id="cd07079">
    <property type="entry name" value="ALDH_F18-19_ProA-GPR"/>
    <property type="match status" value="1"/>
</dbReference>
<dbReference type="FunFam" id="3.40.309.10:FF:000006">
    <property type="entry name" value="Gamma-glutamyl phosphate reductase"/>
    <property type="match status" value="1"/>
</dbReference>
<dbReference type="Gene3D" id="3.40.605.10">
    <property type="entry name" value="Aldehyde Dehydrogenase, Chain A, domain 1"/>
    <property type="match status" value="1"/>
</dbReference>
<dbReference type="Gene3D" id="3.40.309.10">
    <property type="entry name" value="Aldehyde Dehydrogenase, Chain A, domain 2"/>
    <property type="match status" value="1"/>
</dbReference>
<dbReference type="HAMAP" id="MF_00412">
    <property type="entry name" value="ProA"/>
    <property type="match status" value="1"/>
</dbReference>
<dbReference type="InterPro" id="IPR016161">
    <property type="entry name" value="Ald_DH/histidinol_DH"/>
</dbReference>
<dbReference type="InterPro" id="IPR016163">
    <property type="entry name" value="Ald_DH_C"/>
</dbReference>
<dbReference type="InterPro" id="IPR016162">
    <property type="entry name" value="Ald_DH_N"/>
</dbReference>
<dbReference type="InterPro" id="IPR015590">
    <property type="entry name" value="Aldehyde_DH_dom"/>
</dbReference>
<dbReference type="InterPro" id="IPR020593">
    <property type="entry name" value="G-glutamylP_reductase_CS"/>
</dbReference>
<dbReference type="InterPro" id="IPR012134">
    <property type="entry name" value="Glu-5-SA_DH"/>
</dbReference>
<dbReference type="InterPro" id="IPR000965">
    <property type="entry name" value="GPR_dom"/>
</dbReference>
<dbReference type="NCBIfam" id="NF001221">
    <property type="entry name" value="PRK00197.1"/>
    <property type="match status" value="1"/>
</dbReference>
<dbReference type="NCBIfam" id="TIGR00407">
    <property type="entry name" value="proA"/>
    <property type="match status" value="1"/>
</dbReference>
<dbReference type="PANTHER" id="PTHR11063:SF8">
    <property type="entry name" value="DELTA-1-PYRROLINE-5-CARBOXYLATE SYNTHASE"/>
    <property type="match status" value="1"/>
</dbReference>
<dbReference type="PANTHER" id="PTHR11063">
    <property type="entry name" value="GLUTAMATE SEMIALDEHYDE DEHYDROGENASE"/>
    <property type="match status" value="1"/>
</dbReference>
<dbReference type="Pfam" id="PF00171">
    <property type="entry name" value="Aldedh"/>
    <property type="match status" value="1"/>
</dbReference>
<dbReference type="PIRSF" id="PIRSF000151">
    <property type="entry name" value="GPR"/>
    <property type="match status" value="1"/>
</dbReference>
<dbReference type="SUPFAM" id="SSF53720">
    <property type="entry name" value="ALDH-like"/>
    <property type="match status" value="1"/>
</dbReference>
<dbReference type="PROSITE" id="PS01223">
    <property type="entry name" value="PROA"/>
    <property type="match status" value="1"/>
</dbReference>
<protein>
    <recommendedName>
        <fullName evidence="1">Gamma-glutamyl phosphate reductase</fullName>
        <shortName evidence="1">GPR</shortName>
        <ecNumber evidence="1">1.2.1.41</ecNumber>
    </recommendedName>
    <alternativeName>
        <fullName evidence="1">Glutamate-5-semialdehyde dehydrogenase</fullName>
    </alternativeName>
    <alternativeName>
        <fullName evidence="1">Glutamyl-gamma-semialdehyde dehydrogenase</fullName>
        <shortName evidence="1">GSA dehydrogenase</shortName>
    </alternativeName>
</protein>
<name>PROA_ANAD2</name>
<gene>
    <name evidence="1" type="primary">proA</name>
    <name type="ordered locus">A2cp1_0236</name>
</gene>
<evidence type="ECO:0000255" key="1">
    <source>
        <dbReference type="HAMAP-Rule" id="MF_00412"/>
    </source>
</evidence>